<evidence type="ECO:0000255" key="1">
    <source>
        <dbReference type="HAMAP-Rule" id="MF_01039"/>
    </source>
</evidence>
<accession>B8EML2</accession>
<dbReference type="EC" id="5.4.2.11" evidence="1"/>
<dbReference type="EMBL" id="CP001280">
    <property type="protein sequence ID" value="ACK52691.1"/>
    <property type="molecule type" value="Genomic_DNA"/>
</dbReference>
<dbReference type="RefSeq" id="WP_012592759.1">
    <property type="nucleotide sequence ID" value="NC_011666.1"/>
</dbReference>
<dbReference type="SMR" id="B8EML2"/>
<dbReference type="STRING" id="395965.Msil_3809"/>
<dbReference type="KEGG" id="msl:Msil_3809"/>
<dbReference type="eggNOG" id="COG0588">
    <property type="taxonomic scope" value="Bacteria"/>
</dbReference>
<dbReference type="HOGENOM" id="CLU_033323_1_4_5"/>
<dbReference type="OrthoDB" id="9781415at2"/>
<dbReference type="UniPathway" id="UPA00109">
    <property type="reaction ID" value="UER00186"/>
</dbReference>
<dbReference type="Proteomes" id="UP000002257">
    <property type="component" value="Chromosome"/>
</dbReference>
<dbReference type="GO" id="GO:0004619">
    <property type="term" value="F:phosphoglycerate mutase activity"/>
    <property type="evidence" value="ECO:0007669"/>
    <property type="project" value="UniProtKB-EC"/>
</dbReference>
<dbReference type="GO" id="GO:0006094">
    <property type="term" value="P:gluconeogenesis"/>
    <property type="evidence" value="ECO:0007669"/>
    <property type="project" value="UniProtKB-UniRule"/>
</dbReference>
<dbReference type="GO" id="GO:0006096">
    <property type="term" value="P:glycolytic process"/>
    <property type="evidence" value="ECO:0007669"/>
    <property type="project" value="UniProtKB-UniRule"/>
</dbReference>
<dbReference type="CDD" id="cd07067">
    <property type="entry name" value="HP_PGM_like"/>
    <property type="match status" value="1"/>
</dbReference>
<dbReference type="Gene3D" id="3.40.50.1240">
    <property type="entry name" value="Phosphoglycerate mutase-like"/>
    <property type="match status" value="1"/>
</dbReference>
<dbReference type="HAMAP" id="MF_01039">
    <property type="entry name" value="PGAM_GpmA"/>
    <property type="match status" value="1"/>
</dbReference>
<dbReference type="InterPro" id="IPR013078">
    <property type="entry name" value="His_Pase_superF_clade-1"/>
</dbReference>
<dbReference type="InterPro" id="IPR029033">
    <property type="entry name" value="His_PPase_superfam"/>
</dbReference>
<dbReference type="InterPro" id="IPR001345">
    <property type="entry name" value="PG/BPGM_mutase_AS"/>
</dbReference>
<dbReference type="InterPro" id="IPR005952">
    <property type="entry name" value="Phosphogly_mut1"/>
</dbReference>
<dbReference type="NCBIfam" id="TIGR01258">
    <property type="entry name" value="pgm_1"/>
    <property type="match status" value="1"/>
</dbReference>
<dbReference type="NCBIfam" id="NF002339">
    <property type="entry name" value="PRK01295.1"/>
    <property type="match status" value="1"/>
</dbReference>
<dbReference type="PANTHER" id="PTHR11931">
    <property type="entry name" value="PHOSPHOGLYCERATE MUTASE"/>
    <property type="match status" value="1"/>
</dbReference>
<dbReference type="Pfam" id="PF00300">
    <property type="entry name" value="His_Phos_1"/>
    <property type="match status" value="1"/>
</dbReference>
<dbReference type="PIRSF" id="PIRSF000709">
    <property type="entry name" value="6PFK_2-Ptase"/>
    <property type="match status" value="1"/>
</dbReference>
<dbReference type="SMART" id="SM00855">
    <property type="entry name" value="PGAM"/>
    <property type="match status" value="1"/>
</dbReference>
<dbReference type="SUPFAM" id="SSF53254">
    <property type="entry name" value="Phosphoglycerate mutase-like"/>
    <property type="match status" value="1"/>
</dbReference>
<dbReference type="PROSITE" id="PS00175">
    <property type="entry name" value="PG_MUTASE"/>
    <property type="match status" value="1"/>
</dbReference>
<proteinExistence type="inferred from homology"/>
<reference key="1">
    <citation type="journal article" date="2010" name="J. Bacteriol.">
        <title>Complete genome sequence of the aerobic facultative methanotroph Methylocella silvestris BL2.</title>
        <authorList>
            <person name="Chen Y."/>
            <person name="Crombie A."/>
            <person name="Rahman M.T."/>
            <person name="Dedysh S.N."/>
            <person name="Liesack W."/>
            <person name="Stott M.B."/>
            <person name="Alam M."/>
            <person name="Theisen A.R."/>
            <person name="Murrell J.C."/>
            <person name="Dunfield P.F."/>
        </authorList>
    </citation>
    <scope>NUCLEOTIDE SEQUENCE [LARGE SCALE GENOMIC DNA]</scope>
    <source>
        <strain>DSM 15510 / CIP 108128 / LMG 27833 / NCIMB 13906 / BL2</strain>
    </source>
</reference>
<sequence length="206" mass="22737">MDRLLVLVRHGQSEWNLQNLFTGWKDPDLTDLGVSEAKAAGRALKTAGVGFDIGFTSDLLRAQRTMKLLLAEFGQPDLQVTKNVSLNERDYGDLSGLNKAEAAQQWGDEQVHLWRRSYDVPPPGGESLKDTVARVLPYYCQEILPAVLNGKRTLVTAHGNSLRALIMVLDKLTPKTIPGMELATGVPIVYRLKADSTVESKQVLEP</sequence>
<keyword id="KW-0312">Gluconeogenesis</keyword>
<keyword id="KW-0324">Glycolysis</keyword>
<keyword id="KW-0413">Isomerase</keyword>
<keyword id="KW-1185">Reference proteome</keyword>
<name>GPMA_METSB</name>
<gene>
    <name evidence="1" type="primary">gpmA</name>
    <name type="ordered locus">Msil_3809</name>
</gene>
<protein>
    <recommendedName>
        <fullName evidence="1">2,3-bisphosphoglycerate-dependent phosphoglycerate mutase</fullName>
        <shortName evidence="1">BPG-dependent PGAM</shortName>
        <shortName evidence="1">PGAM</shortName>
        <shortName evidence="1">Phosphoglyceromutase</shortName>
        <shortName evidence="1">dPGM</shortName>
        <ecNumber evidence="1">5.4.2.11</ecNumber>
    </recommendedName>
</protein>
<comment type="function">
    <text evidence="1">Catalyzes the interconversion of 2-phosphoglycerate and 3-phosphoglycerate.</text>
</comment>
<comment type="catalytic activity">
    <reaction evidence="1">
        <text>(2R)-2-phosphoglycerate = (2R)-3-phosphoglycerate</text>
        <dbReference type="Rhea" id="RHEA:15901"/>
        <dbReference type="ChEBI" id="CHEBI:58272"/>
        <dbReference type="ChEBI" id="CHEBI:58289"/>
        <dbReference type="EC" id="5.4.2.11"/>
    </reaction>
</comment>
<comment type="pathway">
    <text evidence="1">Carbohydrate degradation; glycolysis; pyruvate from D-glyceraldehyde 3-phosphate: step 3/5.</text>
</comment>
<comment type="subunit">
    <text evidence="1">Homodimer.</text>
</comment>
<comment type="similarity">
    <text evidence="1">Belongs to the phosphoglycerate mutase family. BPG-dependent PGAM subfamily.</text>
</comment>
<feature type="chain" id="PRO_1000149522" description="2,3-bisphosphoglycerate-dependent phosphoglycerate mutase">
    <location>
        <begin position="1"/>
        <end position="206"/>
    </location>
</feature>
<feature type="active site" description="Tele-phosphohistidine intermediate" evidence="1">
    <location>
        <position position="10"/>
    </location>
</feature>
<feature type="active site" description="Proton donor/acceptor" evidence="1">
    <location>
        <position position="88"/>
    </location>
</feature>
<feature type="binding site" evidence="1">
    <location>
        <begin position="9"/>
        <end position="16"/>
    </location>
    <ligand>
        <name>substrate</name>
    </ligand>
</feature>
<feature type="binding site" evidence="1">
    <location>
        <begin position="22"/>
        <end position="23"/>
    </location>
    <ligand>
        <name>substrate</name>
    </ligand>
</feature>
<feature type="binding site" evidence="1">
    <location>
        <position position="61"/>
    </location>
    <ligand>
        <name>substrate</name>
    </ligand>
</feature>
<feature type="binding site" evidence="1">
    <location>
        <begin position="88"/>
        <end position="91"/>
    </location>
    <ligand>
        <name>substrate</name>
    </ligand>
</feature>
<feature type="binding site" evidence="1">
    <location>
        <position position="99"/>
    </location>
    <ligand>
        <name>substrate</name>
    </ligand>
</feature>
<feature type="binding site" evidence="1">
    <location>
        <begin position="115"/>
        <end position="116"/>
    </location>
    <ligand>
        <name>substrate</name>
    </ligand>
</feature>
<feature type="binding site" evidence="1">
    <location>
        <begin position="159"/>
        <end position="160"/>
    </location>
    <ligand>
        <name>substrate</name>
    </ligand>
</feature>
<feature type="site" description="Transition state stabilizer" evidence="1">
    <location>
        <position position="158"/>
    </location>
</feature>
<organism>
    <name type="scientific">Methylocella silvestris (strain DSM 15510 / CIP 108128 / LMG 27833 / NCIMB 13906 / BL2)</name>
    <dbReference type="NCBI Taxonomy" id="395965"/>
    <lineage>
        <taxon>Bacteria</taxon>
        <taxon>Pseudomonadati</taxon>
        <taxon>Pseudomonadota</taxon>
        <taxon>Alphaproteobacteria</taxon>
        <taxon>Hyphomicrobiales</taxon>
        <taxon>Beijerinckiaceae</taxon>
        <taxon>Methylocella</taxon>
    </lineage>
</organism>